<protein>
    <recommendedName>
        <fullName evidence="5">Phyllospetin-H3</fullName>
        <shortName evidence="5">PLS-H3</shortName>
    </recommendedName>
    <alternativeName>
        <fullName evidence="4">Phylloseptin-3</fullName>
        <shortName evidence="4">PS-3</shortName>
    </alternativeName>
</protein>
<feature type="peptide" id="PRO_0000043824" description="Phyllospetin-H3" evidence="2">
    <location>
        <begin position="1"/>
        <end position="19"/>
    </location>
</feature>
<feature type="modified residue" description="Glycine amide" evidence="2 3">
    <location>
        <position position="19"/>
    </location>
</feature>
<feature type="helix" evidence="7">
    <location>
        <begin position="5"/>
        <end position="15"/>
    </location>
</feature>
<evidence type="ECO:0000250" key="1">
    <source>
        <dbReference type="UniProtKB" id="P84566"/>
    </source>
</evidence>
<evidence type="ECO:0000269" key="2">
    <source>
    </source>
</evidence>
<evidence type="ECO:0000269" key="3">
    <source>
    </source>
</evidence>
<evidence type="ECO:0000303" key="4">
    <source>
    </source>
</evidence>
<evidence type="ECO:0000303" key="5">
    <source>
    </source>
</evidence>
<evidence type="ECO:0000305" key="6"/>
<evidence type="ECO:0007829" key="7">
    <source>
        <dbReference type="PDB" id="2JQ1"/>
    </source>
</evidence>
<proteinExistence type="evidence at protein level"/>
<dbReference type="PDB" id="2JQ1">
    <property type="method" value="NMR"/>
    <property type="chains" value="A=1-19"/>
</dbReference>
<dbReference type="PDBsum" id="2JQ1"/>
<dbReference type="SMR" id="P84568"/>
<dbReference type="EvolutionaryTrace" id="P84568"/>
<dbReference type="GO" id="GO:0005576">
    <property type="term" value="C:extracellular region"/>
    <property type="evidence" value="ECO:0007669"/>
    <property type="project" value="UniProtKB-SubCell"/>
</dbReference>
<dbReference type="GO" id="GO:0006952">
    <property type="term" value="P:defense response"/>
    <property type="evidence" value="ECO:0007669"/>
    <property type="project" value="UniProtKB-KW"/>
</dbReference>
<sequence length="19" mass="1945">FLSLIPHAINAVSALANHG</sequence>
<reference evidence="6" key="1">
    <citation type="journal article" date="2005" name="Peptides">
        <title>Phylloseptins: a novel class of anti-bacterial and anti-protozoan peptides from the Phyllomedusa genus.</title>
        <authorList>
            <person name="Leite J.R.S.A."/>
            <person name="Silva L.P."/>
            <person name="Rodrigues M.I.S."/>
            <person name="Prates M.V."/>
            <person name="Brand G.D."/>
            <person name="Lacava B.M."/>
            <person name="Azevedo R.B."/>
            <person name="Bocca A.L."/>
            <person name="Albuquerque S."/>
            <person name="Bloch C. Jr."/>
        </authorList>
    </citation>
    <scope>PROTEIN SEQUENCE</scope>
    <scope>SUBCELLULAR LOCATION</scope>
    <scope>TISSUE SPECIFICITY</scope>
    <scope>MASS SPECTROMETRY</scope>
    <scope>AMIDATION AT GLY-19</scope>
    <source>
        <tissue evidence="2">Skin secretion</tissue>
    </source>
</reference>
<reference key="2">
    <citation type="journal article" date="2008" name="Peptides">
        <title>A consistent nomenclature of antimicrobial peptides isolated from frogs of the subfamily Phyllomedusinae.</title>
        <authorList>
            <person name="Amiche M."/>
            <person name="Ladram A."/>
            <person name="Nicolas P."/>
        </authorList>
    </citation>
    <scope>NOMENCLATURE</scope>
</reference>
<reference key="3">
    <citation type="journal article" date="2008" name="Peptides">
        <title>Solution NMR structures of the antimicrobial peptides phylloseptin-1, -2, and -3 and biological activity: the role of charges and hydrogen bonding interactions in stabilizing helix conformations.</title>
        <authorList>
            <person name="Resende J.M."/>
            <person name="Moraes C.M."/>
            <person name="Prates M.V."/>
            <person name="Cesar A."/>
            <person name="Almeida F.C."/>
            <person name="Mundim N.C."/>
            <person name="Valente A.P."/>
            <person name="Bemquerer M.P."/>
            <person name="Pilo-Veloso D."/>
            <person name="Bechinger B."/>
        </authorList>
    </citation>
    <scope>STRUCTURE BY NMR</scope>
    <scope>AMIDATION AT GLY-19</scope>
</reference>
<accession>P84568</accession>
<keyword id="KW-0002">3D-structure</keyword>
<keyword id="KW-0027">Amidation</keyword>
<keyword id="KW-0878">Amphibian defense peptide</keyword>
<keyword id="KW-0929">Antimicrobial</keyword>
<keyword id="KW-0903">Direct protein sequencing</keyword>
<keyword id="KW-0964">Secreted</keyword>
<name>PLS3_PITHY</name>
<comment type="function">
    <text evidence="1">Has antimicrobial activity.</text>
</comment>
<comment type="subcellular location">
    <subcellularLocation>
        <location evidence="2">Secreted</location>
    </subcellularLocation>
</comment>
<comment type="tissue specificity">
    <text evidence="2">Expressed by the skin glands.</text>
</comment>
<comment type="mass spectrometry" mass="1944.05" method="MALDI" evidence="2"/>
<comment type="similarity">
    <text evidence="6">Belongs to the frog skin active peptide (FSAP) family. Phylloseptin subfamily.</text>
</comment>
<comment type="online information" name="The antimicrobial peptide database">
    <link uri="https://wangapd3.com/database/query_output.php?ID=00758"/>
</comment>
<gene>
    <name type="primary">psn3</name>
    <name type="synonym">psn-3</name>
</gene>
<organism>
    <name type="scientific">Pithecopus hypochondrialis</name>
    <name type="common">Orange-legged leaf frog</name>
    <name type="synonym">Phyllomedusa hypochondrialis</name>
    <dbReference type="NCBI Taxonomy" id="317381"/>
    <lineage>
        <taxon>Eukaryota</taxon>
        <taxon>Metazoa</taxon>
        <taxon>Chordata</taxon>
        <taxon>Craniata</taxon>
        <taxon>Vertebrata</taxon>
        <taxon>Euteleostomi</taxon>
        <taxon>Amphibia</taxon>
        <taxon>Batrachia</taxon>
        <taxon>Anura</taxon>
        <taxon>Neobatrachia</taxon>
        <taxon>Hyloidea</taxon>
        <taxon>Hylidae</taxon>
        <taxon>Phyllomedusinae</taxon>
        <taxon>Pithecopus</taxon>
    </lineage>
</organism>